<dbReference type="EMBL" id="AE004439">
    <property type="protein sequence ID" value="AAK04071.1"/>
    <property type="molecule type" value="Genomic_DNA"/>
</dbReference>
<dbReference type="RefSeq" id="WP_005725082.1">
    <property type="nucleotide sequence ID" value="NC_002663.1"/>
</dbReference>
<dbReference type="SMR" id="P57984"/>
<dbReference type="STRING" id="272843.PM1987"/>
<dbReference type="EnsemblBacteria" id="AAK04071">
    <property type="protein sequence ID" value="AAK04071"/>
    <property type="gene ID" value="PM1987"/>
</dbReference>
<dbReference type="GeneID" id="77207314"/>
<dbReference type="KEGG" id="pmu:PM1987"/>
<dbReference type="HOGENOM" id="CLU_073981_2_0_6"/>
<dbReference type="OrthoDB" id="9804006at2"/>
<dbReference type="Proteomes" id="UP000000809">
    <property type="component" value="Chromosome"/>
</dbReference>
<dbReference type="GO" id="GO:0005829">
    <property type="term" value="C:cytosol"/>
    <property type="evidence" value="ECO:0007669"/>
    <property type="project" value="GOC"/>
</dbReference>
<dbReference type="GO" id="GO:0043023">
    <property type="term" value="F:ribosomal large subunit binding"/>
    <property type="evidence" value="ECO:0007669"/>
    <property type="project" value="TreeGrafter"/>
</dbReference>
<dbReference type="GO" id="GO:0002184">
    <property type="term" value="P:cytoplasmic translational termination"/>
    <property type="evidence" value="ECO:0007669"/>
    <property type="project" value="TreeGrafter"/>
</dbReference>
<dbReference type="CDD" id="cd00520">
    <property type="entry name" value="RRF"/>
    <property type="match status" value="1"/>
</dbReference>
<dbReference type="FunFam" id="1.10.132.20:FF:000001">
    <property type="entry name" value="Ribosome-recycling factor"/>
    <property type="match status" value="1"/>
</dbReference>
<dbReference type="FunFam" id="3.30.1360.40:FF:000001">
    <property type="entry name" value="Ribosome-recycling factor"/>
    <property type="match status" value="1"/>
</dbReference>
<dbReference type="Gene3D" id="3.30.1360.40">
    <property type="match status" value="1"/>
</dbReference>
<dbReference type="Gene3D" id="1.10.132.20">
    <property type="entry name" value="Ribosome-recycling factor"/>
    <property type="match status" value="1"/>
</dbReference>
<dbReference type="HAMAP" id="MF_00040">
    <property type="entry name" value="RRF"/>
    <property type="match status" value="1"/>
</dbReference>
<dbReference type="InterPro" id="IPR002661">
    <property type="entry name" value="Ribosome_recyc_fac"/>
</dbReference>
<dbReference type="InterPro" id="IPR023584">
    <property type="entry name" value="Ribosome_recyc_fac_dom"/>
</dbReference>
<dbReference type="InterPro" id="IPR036191">
    <property type="entry name" value="RRF_sf"/>
</dbReference>
<dbReference type="NCBIfam" id="TIGR00496">
    <property type="entry name" value="frr"/>
    <property type="match status" value="1"/>
</dbReference>
<dbReference type="PANTHER" id="PTHR20982:SF3">
    <property type="entry name" value="MITOCHONDRIAL RIBOSOME RECYCLING FACTOR PSEUDO 1"/>
    <property type="match status" value="1"/>
</dbReference>
<dbReference type="PANTHER" id="PTHR20982">
    <property type="entry name" value="RIBOSOME RECYCLING FACTOR"/>
    <property type="match status" value="1"/>
</dbReference>
<dbReference type="Pfam" id="PF01765">
    <property type="entry name" value="RRF"/>
    <property type="match status" value="1"/>
</dbReference>
<dbReference type="SUPFAM" id="SSF55194">
    <property type="entry name" value="Ribosome recycling factor, RRF"/>
    <property type="match status" value="1"/>
</dbReference>
<comment type="function">
    <text evidence="1">Responsible for the release of ribosomes from messenger RNA at the termination of protein biosynthesis. May increase the efficiency of translation by recycling ribosomes from one round of translation to another.</text>
</comment>
<comment type="subcellular location">
    <subcellularLocation>
        <location evidence="1">Cytoplasm</location>
    </subcellularLocation>
</comment>
<comment type="similarity">
    <text evidence="1">Belongs to the RRF family.</text>
</comment>
<keyword id="KW-0963">Cytoplasm</keyword>
<keyword id="KW-0648">Protein biosynthesis</keyword>
<keyword id="KW-1185">Reference proteome</keyword>
<protein>
    <recommendedName>
        <fullName evidence="1">Ribosome-recycling factor</fullName>
        <shortName evidence="1">RRF</shortName>
    </recommendedName>
    <alternativeName>
        <fullName evidence="1">Ribosome-releasing factor</fullName>
    </alternativeName>
</protein>
<sequence length="185" mass="20851">MINEIKKDTQLRMEKSLETFKNHIAKVRTGRAQPSLLDGIQVEYYGSPTPLRQLANVVAEDARTLAVTVFDRSLISAVEKAILTSDLGLNPSSAGTTIRVPLPPLTEERRRDLIKIVKGEAEQGKIAVRNVRRDANDQIKALLKDKEISEDEERKAQDEIQKITDTFVKKVDEVLADKEKELLDF</sequence>
<reference key="1">
    <citation type="journal article" date="2001" name="Proc. Natl. Acad. Sci. U.S.A.">
        <title>Complete genomic sequence of Pasteurella multocida Pm70.</title>
        <authorList>
            <person name="May B.J."/>
            <person name="Zhang Q."/>
            <person name="Li L.L."/>
            <person name="Paustian M.L."/>
            <person name="Whittam T.S."/>
            <person name="Kapur V."/>
        </authorList>
    </citation>
    <scope>NUCLEOTIDE SEQUENCE [LARGE SCALE GENOMIC DNA]</scope>
    <source>
        <strain>Pm70</strain>
    </source>
</reference>
<evidence type="ECO:0000255" key="1">
    <source>
        <dbReference type="HAMAP-Rule" id="MF_00040"/>
    </source>
</evidence>
<organism>
    <name type="scientific">Pasteurella multocida (strain Pm70)</name>
    <dbReference type="NCBI Taxonomy" id="272843"/>
    <lineage>
        <taxon>Bacteria</taxon>
        <taxon>Pseudomonadati</taxon>
        <taxon>Pseudomonadota</taxon>
        <taxon>Gammaproteobacteria</taxon>
        <taxon>Pasteurellales</taxon>
        <taxon>Pasteurellaceae</taxon>
        <taxon>Pasteurella</taxon>
    </lineage>
</organism>
<proteinExistence type="inferred from homology"/>
<gene>
    <name evidence="1" type="primary">frr</name>
    <name type="synonym">errF</name>
    <name type="ordered locus">PM1987</name>
</gene>
<feature type="chain" id="PRO_0000167510" description="Ribosome-recycling factor">
    <location>
        <begin position="1"/>
        <end position="185"/>
    </location>
</feature>
<accession>P57984</accession>
<name>RRF_PASMU</name>